<feature type="chain" id="PRO_0000311196" description="Leucine-rich repeat and IQ domain-containing protein 3">
    <location>
        <begin position="1"/>
        <end position="633"/>
    </location>
</feature>
<feature type="repeat" description="LRR 1">
    <location>
        <begin position="51"/>
        <end position="72"/>
    </location>
</feature>
<feature type="repeat" description="LRR 2">
    <location>
        <begin position="73"/>
        <end position="94"/>
    </location>
</feature>
<feature type="repeat" description="LRR 3">
    <location>
        <begin position="98"/>
        <end position="119"/>
    </location>
</feature>
<feature type="domain" description="LRRCT">
    <location>
        <begin position="132"/>
        <end position="179"/>
    </location>
</feature>
<feature type="domain" description="IQ" evidence="2">
    <location>
        <begin position="215"/>
        <end position="244"/>
    </location>
</feature>
<feature type="region of interest" description="Disordered" evidence="3">
    <location>
        <begin position="322"/>
        <end position="343"/>
    </location>
</feature>
<feature type="coiled-coil region" evidence="1">
    <location>
        <begin position="556"/>
        <end position="616"/>
    </location>
</feature>
<gene>
    <name type="primary">Lrriq3</name>
    <name type="synonym">Lrrc44</name>
</gene>
<reference key="1">
    <citation type="journal article" date="2004" name="Genome Res.">
        <title>The status, quality, and expansion of the NIH full-length cDNA project: the Mammalian Gene Collection (MGC).</title>
        <authorList>
            <consortium name="The MGC Project Team"/>
        </authorList>
    </citation>
    <scope>NUCLEOTIDE SEQUENCE [LARGE SCALE MRNA]</scope>
    <source>
        <tissue>Testis</tissue>
    </source>
</reference>
<dbReference type="EMBL" id="BC078994">
    <property type="protein sequence ID" value="AAH78994.1"/>
    <property type="molecule type" value="mRNA"/>
</dbReference>
<dbReference type="RefSeq" id="NP_001019478.1">
    <property type="nucleotide sequence ID" value="NM_001024307.1"/>
</dbReference>
<dbReference type="SMR" id="Q6AYL8"/>
<dbReference type="FunCoup" id="Q6AYL8">
    <property type="interactions" value="27"/>
</dbReference>
<dbReference type="STRING" id="10116.ENSRNOP00000012841"/>
<dbReference type="PhosphoSitePlus" id="Q6AYL8"/>
<dbReference type="PaxDb" id="10116-ENSRNOP00000012841"/>
<dbReference type="Ensembl" id="ENSRNOT00000012841.8">
    <property type="protein sequence ID" value="ENSRNOP00000012841.5"/>
    <property type="gene ID" value="ENSRNOG00000009555.8"/>
</dbReference>
<dbReference type="GeneID" id="499732"/>
<dbReference type="KEGG" id="rno:499732"/>
<dbReference type="AGR" id="RGD:1591943"/>
<dbReference type="CTD" id="127255"/>
<dbReference type="RGD" id="1591943">
    <property type="gene designation" value="Lrriq3"/>
</dbReference>
<dbReference type="eggNOG" id="KOG0531">
    <property type="taxonomic scope" value="Eukaryota"/>
</dbReference>
<dbReference type="GeneTree" id="ENSGT00390000004404"/>
<dbReference type="HOGENOM" id="CLU_029934_0_0_1"/>
<dbReference type="InParanoid" id="Q6AYL8"/>
<dbReference type="OMA" id="KLPICTS"/>
<dbReference type="OrthoDB" id="676979at2759"/>
<dbReference type="PhylomeDB" id="Q6AYL8"/>
<dbReference type="TreeFam" id="TF329557"/>
<dbReference type="PRO" id="PR:Q6AYL8"/>
<dbReference type="Proteomes" id="UP000002494">
    <property type="component" value="Chromosome 2"/>
</dbReference>
<dbReference type="Bgee" id="ENSRNOG00000009555">
    <property type="expression patterns" value="Expressed in testis and 11 other cell types or tissues"/>
</dbReference>
<dbReference type="Gene3D" id="3.80.10.10">
    <property type="entry name" value="Ribonuclease Inhibitor"/>
    <property type="match status" value="1"/>
</dbReference>
<dbReference type="InterPro" id="IPR001611">
    <property type="entry name" value="Leu-rich_rpt"/>
</dbReference>
<dbReference type="InterPro" id="IPR025875">
    <property type="entry name" value="Leu-rich_rpt_4"/>
</dbReference>
<dbReference type="InterPro" id="IPR003591">
    <property type="entry name" value="Leu-rich_rpt_typical-subtyp"/>
</dbReference>
<dbReference type="InterPro" id="IPR052859">
    <property type="entry name" value="LRR-IQ_domain_protein"/>
</dbReference>
<dbReference type="InterPro" id="IPR032675">
    <property type="entry name" value="LRR_dom_sf"/>
</dbReference>
<dbReference type="PANTHER" id="PTHR46723">
    <property type="entry name" value="LEUCINE-RICH REPEAT AND IQ DOMAIN-CONTAINING PROTEIN 3"/>
    <property type="match status" value="1"/>
</dbReference>
<dbReference type="PANTHER" id="PTHR46723:SF1">
    <property type="entry name" value="LEUCINE-RICH REPEAT AND IQ DOMAIN-CONTAINING PROTEIN 3"/>
    <property type="match status" value="1"/>
</dbReference>
<dbReference type="Pfam" id="PF12799">
    <property type="entry name" value="LRR_4"/>
    <property type="match status" value="1"/>
</dbReference>
<dbReference type="SMART" id="SM00369">
    <property type="entry name" value="LRR_TYP"/>
    <property type="match status" value="2"/>
</dbReference>
<dbReference type="SUPFAM" id="SSF52058">
    <property type="entry name" value="L domain-like"/>
    <property type="match status" value="1"/>
</dbReference>
<dbReference type="PROSITE" id="PS50096">
    <property type="entry name" value="IQ"/>
    <property type="match status" value="1"/>
</dbReference>
<dbReference type="PROSITE" id="PS51450">
    <property type="entry name" value="LRR"/>
    <property type="match status" value="3"/>
</dbReference>
<organism>
    <name type="scientific">Rattus norvegicus</name>
    <name type="common">Rat</name>
    <dbReference type="NCBI Taxonomy" id="10116"/>
    <lineage>
        <taxon>Eukaryota</taxon>
        <taxon>Metazoa</taxon>
        <taxon>Chordata</taxon>
        <taxon>Craniata</taxon>
        <taxon>Vertebrata</taxon>
        <taxon>Euteleostomi</taxon>
        <taxon>Mammalia</taxon>
        <taxon>Eutheria</taxon>
        <taxon>Euarchontoglires</taxon>
        <taxon>Glires</taxon>
        <taxon>Rodentia</taxon>
        <taxon>Myomorpha</taxon>
        <taxon>Muroidea</taxon>
        <taxon>Muridae</taxon>
        <taxon>Murinae</taxon>
        <taxon>Rattus</taxon>
    </lineage>
</organism>
<name>LRIQ3_RAT</name>
<sequence>MFHGTITKELTSHEEWSHYNENIVEDQKDFVFVKYNGLHLKSMENLQSCISLRVCIFSNNFVTDIQPLQGCKKLIKLDLHGNQIKTLPDRTFWNGLKNLKLLYLHDNGFAKLKNICVLSGCVNLVGLTMFDCPVSLKKGYRHVLVNSIWPLKALDHHVISDEEIIQNWHLPERFKTFSQSLFFNICPAPIKGTTYEDEIKNIKHIISRINEILAHNSPVLIIQRWIRGFIVRKHLSPYFTRKRHHDRMIRVLETKLICIGRNNEDKFLEDIFLIKPESNIKGKVAHWKQMRYSPDDFKYSTEYRKHISCLSYELKTKDIAGNSKQPRHHIQKGQNEMKSDSEDEEVDTKFRISAMKIPLCPSRSLKYRAMLKEIKWDYFPEYLQPLPATRQKPQVKRETHEELKERRNFLASQRAGMDLHLFNDIDKYYSEQRQQEEEARKFAATAAAQVAQERARLNTSENLRKKISMARKLMQKDNETIQKGLRHIWKERLNYLEKVRERKSMFLAEKKLNAADQSLVLSLNNERSILLRGIIQVDKLKRDLSEMKAKHFDVIEKREKRKYKQNLLTEMKKLRAEEIHKRHCEERFVIDTLIFQKGCERLEEAKAKVEFINTYYTSKSHKKYHNKTMLNHI</sequence>
<proteinExistence type="evidence at transcript level"/>
<accession>Q6AYL8</accession>
<keyword id="KW-0175">Coiled coil</keyword>
<keyword id="KW-0433">Leucine-rich repeat</keyword>
<keyword id="KW-1185">Reference proteome</keyword>
<keyword id="KW-0677">Repeat</keyword>
<protein>
    <recommendedName>
        <fullName>Leucine-rich repeat and IQ domain-containing protein 3</fullName>
    </recommendedName>
    <alternativeName>
        <fullName>Leucine-rich repeat-containing protein 44</fullName>
    </alternativeName>
</protein>
<evidence type="ECO:0000255" key="1"/>
<evidence type="ECO:0000255" key="2">
    <source>
        <dbReference type="PROSITE-ProRule" id="PRU00116"/>
    </source>
</evidence>
<evidence type="ECO:0000256" key="3">
    <source>
        <dbReference type="SAM" id="MobiDB-lite"/>
    </source>
</evidence>